<reference key="1">
    <citation type="journal article" date="2008" name="J. Proteomics">
        <title>A proteomics approach to identify proteins differentially expressed in Douglas-fir seedlings infected by Phellinus sulphurascens.</title>
        <authorList>
            <person name="Islam M.A."/>
            <person name="Sturrock R.N."/>
            <person name="Ekramoddoullah A.K.M."/>
        </authorList>
    </citation>
    <scope>IDENTIFICATION BY MASS SPECTROMETRY</scope>
</reference>
<evidence type="ECO:0000303" key="1">
    <source>
    </source>
</evidence>
<sequence>VGQDATISFK</sequence>
<name>UP15_PSEMZ</name>
<protein>
    <recommendedName>
        <fullName>Unknown protein 15</fullName>
    </recommendedName>
</protein>
<organism>
    <name type="scientific">Pseudotsuga menziesii</name>
    <name type="common">Douglas-fir</name>
    <name type="synonym">Abies menziesii</name>
    <dbReference type="NCBI Taxonomy" id="3357"/>
    <lineage>
        <taxon>Eukaryota</taxon>
        <taxon>Viridiplantae</taxon>
        <taxon>Streptophyta</taxon>
        <taxon>Embryophyta</taxon>
        <taxon>Tracheophyta</taxon>
        <taxon>Spermatophyta</taxon>
        <taxon>Pinopsida</taxon>
        <taxon>Pinidae</taxon>
        <taxon>Conifers I</taxon>
        <taxon>Pinales</taxon>
        <taxon>Pinaceae</taxon>
        <taxon>Pseudotsuga</taxon>
    </lineage>
</organism>
<proteinExistence type="evidence at protein level"/>
<feature type="chain" id="PRO_0000347302" description="Unknown protein 15">
    <location>
        <begin position="1" status="less than"/>
        <end position="10" status="greater than"/>
    </location>
</feature>
<feature type="non-terminal residue" evidence="1">
    <location>
        <position position="1"/>
    </location>
</feature>
<feature type="non-terminal residue" evidence="1">
    <location>
        <position position="10"/>
    </location>
</feature>
<accession>P85921</accession>